<sequence>MPPSSKSRRLPPAASDSAASDAQKRRKNVGTACSACKARKLKCTGAPPCANCVKSRIECTLDETADRRRRGVLKRKIDKLEDQEDLLGRLLEFFREGNNRCTIPLLNLIRSHASPPEIRFYIEHQLPLSKRTQTPELIEVCREIEQRHSFEPLPKRHILDTTPNGSHDTPRLSVPAQPWTSIITDDGLVSRLIFLWFTWVHPFCNFIDRDRFIRDMKSGSLSASYCSPLLVNIILSDACHSASGLPDDLTSKRIEFYEEAERLLDKEEGRISLPTAQGLGVLWMCASITGRDRQAWIKGTQLAYSLRELSQVSCNLPSEANRDATALATIVNSTNWGLFNVAMVHALFARKRPIIEPPAQPPSVSNQCDHGMWYSYPNKSTGVESHTSCLFTAACNLNRIAYNLGRFLFSQEKKSSARLDLTDGELDALRDLNEWADQLPVCLKESIADLPHVLSLHMYNHAILTVVYGFLRTRPLYLPNPSASTPTVRDALMSPARAWAASLSSARKIAHLTLVHRANWGSDRMPGATVHCIMAALFALLDSVDDPANRDAFISLTAAAAAFSRRWESPIALLRNIQNIARQRDVTLPPETGAFFLDPDQPSGNSTPIKSETPEGTAIS</sequence>
<proteinExistence type="evidence at protein level"/>
<protein>
    <recommendedName>
        <fullName evidence="4">Notoamide biosynthesis transcriptional activator notL'</fullName>
    </recommendedName>
    <alternativeName>
        <fullName evidence="4">Notoamide biosynthesis cluster protein L'</fullName>
    </alternativeName>
</protein>
<reference key="1">
    <citation type="journal article" date="2012" name="Med. Chem. Commun.">
        <title>Comparative analysis of the biosynthetic systems for fungal bicyclo[2.2.2]diazaoctane indole alkaloids: the (+)/(-)-notoamide, paraherquamide and malbrancheamide pathways.</title>
        <authorList>
            <person name="Li S."/>
            <person name="Anand K."/>
            <person name="Tran H."/>
            <person name="Yu F."/>
            <person name="Finefield J.M."/>
            <person name="Sunderhaus J.D."/>
            <person name="McAfoos T.J."/>
            <person name="Tsukamoto S."/>
            <person name="Williams R.M."/>
            <person name="Sherman D.H."/>
        </authorList>
    </citation>
    <scope>NUCLEOTIDE SEQUENCE [GENOMIC DNA]</scope>
    <source>
        <strain>NRRL 35600</strain>
    </source>
</reference>
<reference key="2">
    <citation type="journal article" date="2007" name="Angew. Chem. Int. Ed.">
        <title>Notoamides A-D: prenylated indole alkaloids isolated from a marine-derived fungus, Aspergillus sp.</title>
        <authorList>
            <person name="Kato H."/>
            <person name="Yoshida T."/>
            <person name="Tokue T."/>
            <person name="Nojiri Y."/>
            <person name="Hirota H."/>
            <person name="Ohta T."/>
            <person name="Williams R.M."/>
            <person name="Tsukamoto S."/>
        </authorList>
    </citation>
    <scope>BIOTECHNOLOGY</scope>
</reference>
<evidence type="ECO:0000255" key="1">
    <source>
        <dbReference type="PROSITE-ProRule" id="PRU00227"/>
    </source>
</evidence>
<evidence type="ECO:0000256" key="2">
    <source>
        <dbReference type="SAM" id="MobiDB-lite"/>
    </source>
</evidence>
<evidence type="ECO:0000269" key="3">
    <source>
    </source>
</evidence>
<evidence type="ECO:0000303" key="4">
    <source>
    </source>
</evidence>
<evidence type="ECO:0000305" key="5">
    <source>
    </source>
</evidence>
<dbReference type="EMBL" id="JQ708194">
    <property type="protein sequence ID" value="AGC83583.1"/>
    <property type="molecule type" value="Genomic_DNA"/>
</dbReference>
<dbReference type="SMR" id="L7WMF4"/>
<dbReference type="VEuPathDB" id="FungiDB:ASPVEDRAFT_371654"/>
<dbReference type="GO" id="GO:0005634">
    <property type="term" value="C:nucleus"/>
    <property type="evidence" value="ECO:0007669"/>
    <property type="project" value="UniProtKB-SubCell"/>
</dbReference>
<dbReference type="GO" id="GO:0003677">
    <property type="term" value="F:DNA binding"/>
    <property type="evidence" value="ECO:0007669"/>
    <property type="project" value="UniProtKB-KW"/>
</dbReference>
<dbReference type="GO" id="GO:0000981">
    <property type="term" value="F:DNA-binding transcription factor activity, RNA polymerase II-specific"/>
    <property type="evidence" value="ECO:0007669"/>
    <property type="project" value="InterPro"/>
</dbReference>
<dbReference type="GO" id="GO:0008270">
    <property type="term" value="F:zinc ion binding"/>
    <property type="evidence" value="ECO:0007669"/>
    <property type="project" value="InterPro"/>
</dbReference>
<dbReference type="GO" id="GO:0006351">
    <property type="term" value="P:DNA-templated transcription"/>
    <property type="evidence" value="ECO:0007669"/>
    <property type="project" value="InterPro"/>
</dbReference>
<dbReference type="CDD" id="cd12148">
    <property type="entry name" value="fungal_TF_MHR"/>
    <property type="match status" value="1"/>
</dbReference>
<dbReference type="CDD" id="cd00067">
    <property type="entry name" value="GAL4"/>
    <property type="match status" value="1"/>
</dbReference>
<dbReference type="Gene3D" id="4.10.240.10">
    <property type="entry name" value="Zn(2)-C6 fungal-type DNA-binding domain"/>
    <property type="match status" value="1"/>
</dbReference>
<dbReference type="InterPro" id="IPR053187">
    <property type="entry name" value="Notoamide_regulator"/>
</dbReference>
<dbReference type="InterPro" id="IPR007219">
    <property type="entry name" value="Transcription_factor_dom_fun"/>
</dbReference>
<dbReference type="InterPro" id="IPR036864">
    <property type="entry name" value="Zn2-C6_fun-type_DNA-bd_sf"/>
</dbReference>
<dbReference type="InterPro" id="IPR001138">
    <property type="entry name" value="Zn2Cys6_DnaBD"/>
</dbReference>
<dbReference type="PANTHER" id="PTHR47256:SF1">
    <property type="entry name" value="ZN(II)2CYS6 TRANSCRIPTION FACTOR (EUROFUNG)"/>
    <property type="match status" value="1"/>
</dbReference>
<dbReference type="PANTHER" id="PTHR47256">
    <property type="entry name" value="ZN(II)2CYS6 TRANSCRIPTION FACTOR (EUROFUNG)-RELATED"/>
    <property type="match status" value="1"/>
</dbReference>
<dbReference type="Pfam" id="PF04082">
    <property type="entry name" value="Fungal_trans"/>
    <property type="match status" value="1"/>
</dbReference>
<dbReference type="Pfam" id="PF00172">
    <property type="entry name" value="Zn_clus"/>
    <property type="match status" value="1"/>
</dbReference>
<dbReference type="SMART" id="SM00066">
    <property type="entry name" value="GAL4"/>
    <property type="match status" value="1"/>
</dbReference>
<dbReference type="SUPFAM" id="SSF57701">
    <property type="entry name" value="Zn2/Cys6 DNA-binding domain"/>
    <property type="match status" value="1"/>
</dbReference>
<dbReference type="PROSITE" id="PS00463">
    <property type="entry name" value="ZN2_CY6_FUNGAL_1"/>
    <property type="match status" value="1"/>
</dbReference>
<dbReference type="PROSITE" id="PS50048">
    <property type="entry name" value="ZN2_CY6_FUNGAL_2"/>
    <property type="match status" value="1"/>
</dbReference>
<name>NOTL_ASPVE</name>
<feature type="chain" id="PRO_0000448819" description="Notoamide biosynthesis transcriptional activator notL'">
    <location>
        <begin position="1"/>
        <end position="620"/>
    </location>
</feature>
<feature type="DNA-binding region" description="Zn(2)-C6 fungal-type" evidence="1">
    <location>
        <begin position="33"/>
        <end position="59"/>
    </location>
</feature>
<feature type="region of interest" description="Disordered" evidence="2">
    <location>
        <begin position="1"/>
        <end position="26"/>
    </location>
</feature>
<feature type="region of interest" description="Disordered" evidence="2">
    <location>
        <begin position="591"/>
        <end position="620"/>
    </location>
</feature>
<keyword id="KW-0238">DNA-binding</keyword>
<keyword id="KW-0479">Metal-binding</keyword>
<keyword id="KW-0539">Nucleus</keyword>
<keyword id="KW-0804">Transcription</keyword>
<keyword id="KW-0805">Transcription regulation</keyword>
<keyword id="KW-0862">Zinc</keyword>
<gene>
    <name evidence="4" type="primary">notL'</name>
</gene>
<accession>L7WMF4</accession>
<comment type="function">
    <text evidence="5">Transcription factor that probably regulates the expression of the gene cluster that mediates the biosynthesis of notoamide, a fungal indole alkaloid that belongs to a family of natural products containing a characteristic bicyclo[2.2.2]diazaoctane core.</text>
</comment>
<comment type="subcellular location">
    <subcellularLocation>
        <location evidence="1">Nucleus</location>
    </subcellularLocation>
</comment>
<comment type="biotechnology">
    <text evidence="3">Notoamides have been shown to exhibit antitumoral activities (PubMed:17304611). Notoamides A-C show moderate cytotoxicity against HeLa and L1210 cells with IC(50) values in the range of 22-52 mg/ml, but the IC(50) value of notoamide D is greater than 100 mg/ml (PubMed:17304611). Moreover, notoamide C induces G2/M-cell cycle arrest at a concentration of 6.3 mg/ml (PubMed:17304611).</text>
</comment>
<organism>
    <name type="scientific">Aspergillus versicolor</name>
    <dbReference type="NCBI Taxonomy" id="46472"/>
    <lineage>
        <taxon>Eukaryota</taxon>
        <taxon>Fungi</taxon>
        <taxon>Dikarya</taxon>
        <taxon>Ascomycota</taxon>
        <taxon>Pezizomycotina</taxon>
        <taxon>Eurotiomycetes</taxon>
        <taxon>Eurotiomycetidae</taxon>
        <taxon>Eurotiales</taxon>
        <taxon>Aspergillaceae</taxon>
        <taxon>Aspergillus</taxon>
        <taxon>Aspergillus subgen. Nidulantes</taxon>
    </lineage>
</organism>